<proteinExistence type="inferred from homology"/>
<protein>
    <recommendedName>
        <fullName evidence="1">Flagellar transcriptional regulator FlhD</fullName>
    </recommendedName>
</protein>
<sequence>MGTMHTSELLKHIYDINLSYLLLAQRLIVQDKASAMFRLGINEEMANTLGALTLPQMVKLAETNQLVCHFRFDDHQTITRLTQDSRVDDLQQIHTGIMLSTRLLNEADETARKKRA</sequence>
<gene>
    <name evidence="1" type="primary">flhD</name>
    <name type="ordered locus">SARI_01015</name>
</gene>
<comment type="function">
    <text evidence="1">Functions in complex with FlhC as a master transcriptional regulator that regulates transcription of several flagellar and non-flagellar operons by binding to their promoter region. Activates expression of class 2 flagellar genes, including fliA, which is a flagellum-specific sigma factor that turns on the class 3 genes. Also regulates genes whose products function in a variety of physiological pathways.</text>
</comment>
<comment type="subunit">
    <text evidence="1">Homodimer; disulfide-linked. Forms a heterohexamer composed of two FlhC and four FlhD subunits. Each FlhC binds a FlhD dimer, forming a heterotrimer, and a hexamer assembles by dimerization of two heterotrimers.</text>
</comment>
<comment type="subcellular location">
    <subcellularLocation>
        <location evidence="1">Cytoplasm</location>
    </subcellularLocation>
</comment>
<comment type="domain">
    <text evidence="1">The C-terminal region contains a putative helix-turn-helix (HTH) motif, suggesting that this region may bind DNA.</text>
</comment>
<comment type="similarity">
    <text evidence="1">Belongs to the FlhD family.</text>
</comment>
<keyword id="KW-0010">Activator</keyword>
<keyword id="KW-1005">Bacterial flagellum biogenesis</keyword>
<keyword id="KW-0963">Cytoplasm</keyword>
<keyword id="KW-1015">Disulfide bond</keyword>
<keyword id="KW-0238">DNA-binding</keyword>
<keyword id="KW-1185">Reference proteome</keyword>
<keyword id="KW-0804">Transcription</keyword>
<keyword id="KW-0805">Transcription regulation</keyword>
<feature type="chain" id="PRO_1000132692" description="Flagellar transcriptional regulator FlhD">
    <location>
        <begin position="1"/>
        <end position="116"/>
    </location>
</feature>
<feature type="disulfide bond" description="Interchain" evidence="1">
    <location>
        <position position="68"/>
    </location>
</feature>
<organism>
    <name type="scientific">Salmonella arizonae (strain ATCC BAA-731 / CDC346-86 / RSK2980)</name>
    <dbReference type="NCBI Taxonomy" id="41514"/>
    <lineage>
        <taxon>Bacteria</taxon>
        <taxon>Pseudomonadati</taxon>
        <taxon>Pseudomonadota</taxon>
        <taxon>Gammaproteobacteria</taxon>
        <taxon>Enterobacterales</taxon>
        <taxon>Enterobacteriaceae</taxon>
        <taxon>Salmonella</taxon>
    </lineage>
</organism>
<reference key="1">
    <citation type="submission" date="2007-11" db="EMBL/GenBank/DDBJ databases">
        <authorList>
            <consortium name="The Salmonella enterica serovar Arizonae Genome Sequencing Project"/>
            <person name="McClelland M."/>
            <person name="Sanderson E.K."/>
            <person name="Porwollik S."/>
            <person name="Spieth J."/>
            <person name="Clifton W.S."/>
            <person name="Fulton R."/>
            <person name="Chunyan W."/>
            <person name="Wollam A."/>
            <person name="Shah N."/>
            <person name="Pepin K."/>
            <person name="Bhonagiri V."/>
            <person name="Nash W."/>
            <person name="Johnson M."/>
            <person name="Thiruvilangam P."/>
            <person name="Wilson R."/>
        </authorList>
    </citation>
    <scope>NUCLEOTIDE SEQUENCE [LARGE SCALE GENOMIC DNA]</scope>
    <source>
        <strain>ATCC BAA-731 / CDC346-86 / RSK2980</strain>
    </source>
</reference>
<accession>A9MMQ4</accession>
<name>FLHD_SALAR</name>
<dbReference type="EMBL" id="CP000880">
    <property type="protein sequence ID" value="ABX20923.1"/>
    <property type="molecule type" value="Genomic_DNA"/>
</dbReference>
<dbReference type="SMR" id="A9MMQ4"/>
<dbReference type="STRING" id="41514.SARI_01015"/>
<dbReference type="KEGG" id="ses:SARI_01015"/>
<dbReference type="HOGENOM" id="CLU_144160_0_0_6"/>
<dbReference type="Proteomes" id="UP000002084">
    <property type="component" value="Chromosome"/>
</dbReference>
<dbReference type="GO" id="GO:0005737">
    <property type="term" value="C:cytoplasm"/>
    <property type="evidence" value="ECO:0007669"/>
    <property type="project" value="UniProtKB-SubCell"/>
</dbReference>
<dbReference type="GO" id="GO:0003677">
    <property type="term" value="F:DNA binding"/>
    <property type="evidence" value="ECO:0007669"/>
    <property type="project" value="UniProtKB-UniRule"/>
</dbReference>
<dbReference type="GO" id="GO:0044780">
    <property type="term" value="P:bacterial-type flagellum assembly"/>
    <property type="evidence" value="ECO:0007669"/>
    <property type="project" value="InterPro"/>
</dbReference>
<dbReference type="GO" id="GO:0045893">
    <property type="term" value="P:positive regulation of DNA-templated transcription"/>
    <property type="evidence" value="ECO:0007669"/>
    <property type="project" value="InterPro"/>
</dbReference>
<dbReference type="GO" id="GO:1902208">
    <property type="term" value="P:regulation of bacterial-type flagellum assembly"/>
    <property type="evidence" value="ECO:0007669"/>
    <property type="project" value="UniProtKB-UniRule"/>
</dbReference>
<dbReference type="Gene3D" id="1.10.4000.10">
    <property type="entry name" value="Flagellar transcriptional activator FlhD"/>
    <property type="match status" value="1"/>
</dbReference>
<dbReference type="HAMAP" id="MF_00725">
    <property type="entry name" value="FlhD"/>
    <property type="match status" value="1"/>
</dbReference>
<dbReference type="InterPro" id="IPR023559">
    <property type="entry name" value="Flagellar_FlhD"/>
</dbReference>
<dbReference type="InterPro" id="IPR036194">
    <property type="entry name" value="FlhD_sf"/>
</dbReference>
<dbReference type="NCBIfam" id="NF002783">
    <property type="entry name" value="PRK02909.1-1"/>
    <property type="match status" value="1"/>
</dbReference>
<dbReference type="Pfam" id="PF05247">
    <property type="entry name" value="FlhD"/>
    <property type="match status" value="1"/>
</dbReference>
<dbReference type="SUPFAM" id="SSF63592">
    <property type="entry name" value="Flagellar transcriptional activator FlhD"/>
    <property type="match status" value="1"/>
</dbReference>
<evidence type="ECO:0000255" key="1">
    <source>
        <dbReference type="HAMAP-Rule" id="MF_00725"/>
    </source>
</evidence>